<keyword id="KW-0687">Ribonucleoprotein</keyword>
<keyword id="KW-0689">Ribosomal protein</keyword>
<organism>
    <name type="scientific">Staphylococcus aureus (strain Newman)</name>
    <dbReference type="NCBI Taxonomy" id="426430"/>
    <lineage>
        <taxon>Bacteria</taxon>
        <taxon>Bacillati</taxon>
        <taxon>Bacillota</taxon>
        <taxon>Bacilli</taxon>
        <taxon>Bacillales</taxon>
        <taxon>Staphylococcaceae</taxon>
        <taxon>Staphylococcus</taxon>
    </lineage>
</organism>
<evidence type="ECO:0000250" key="1">
    <source>
        <dbReference type="UniProtKB" id="Q2FXT0"/>
    </source>
</evidence>
<evidence type="ECO:0000255" key="2">
    <source>
        <dbReference type="HAMAP-Rule" id="MF_00539"/>
    </source>
</evidence>
<evidence type="ECO:0000305" key="3"/>
<comment type="PTM">
    <text evidence="1">The N-terminus is cleaved by ribosomal processing cysteine protease Prp.</text>
</comment>
<comment type="similarity">
    <text evidence="2">Belongs to the bacterial ribosomal protein bL27 family.</text>
</comment>
<sequence length="94" mass="10315">MLKLNLQFFASKKGVSSTKNGRDSESKRLGAKRADGQFVTGGSILYRQRGTKIYPGENVGRGGDDTLFAKIDGVVKFERKGRDKKQVSVYAVAE</sequence>
<protein>
    <recommendedName>
        <fullName evidence="2">Large ribosomal subunit protein bL27</fullName>
    </recommendedName>
    <alternativeName>
        <fullName evidence="3">50S ribosomal protein L27</fullName>
    </alternativeName>
</protein>
<feature type="propeptide" id="PRO_0000459937" evidence="1">
    <location>
        <begin position="1"/>
        <end position="9"/>
    </location>
</feature>
<feature type="chain" id="PRO_1000072547" description="Large ribosomal subunit protein bL27">
    <location>
        <begin position="10"/>
        <end position="94"/>
    </location>
</feature>
<reference key="1">
    <citation type="journal article" date="2008" name="J. Bacteriol.">
        <title>Genome sequence of Staphylococcus aureus strain Newman and comparative analysis of staphylococcal genomes: polymorphism and evolution of two major pathogenicity islands.</title>
        <authorList>
            <person name="Baba T."/>
            <person name="Bae T."/>
            <person name="Schneewind O."/>
            <person name="Takeuchi F."/>
            <person name="Hiramatsu K."/>
        </authorList>
    </citation>
    <scope>NUCLEOTIDE SEQUENCE [LARGE SCALE GENOMIC DNA]</scope>
    <source>
        <strain>Newman</strain>
    </source>
</reference>
<proteinExistence type="inferred from homology"/>
<accession>A6QHI7</accession>
<gene>
    <name evidence="2" type="primary">rpmA</name>
    <name type="ordered locus">NWMN_1547</name>
</gene>
<dbReference type="EMBL" id="AP009351">
    <property type="protein sequence ID" value="BAF67819.1"/>
    <property type="molecule type" value="Genomic_DNA"/>
</dbReference>
<dbReference type="RefSeq" id="WP_000916187.1">
    <property type="nucleotide sequence ID" value="NZ_JBBIAE010000001.1"/>
</dbReference>
<dbReference type="SMR" id="A6QHI7"/>
<dbReference type="GeneID" id="98346013"/>
<dbReference type="KEGG" id="sae:NWMN_1547"/>
<dbReference type="HOGENOM" id="CLU_095424_4_0_9"/>
<dbReference type="Proteomes" id="UP000006386">
    <property type="component" value="Chromosome"/>
</dbReference>
<dbReference type="GO" id="GO:0022625">
    <property type="term" value="C:cytosolic large ribosomal subunit"/>
    <property type="evidence" value="ECO:0007669"/>
    <property type="project" value="TreeGrafter"/>
</dbReference>
<dbReference type="GO" id="GO:0003735">
    <property type="term" value="F:structural constituent of ribosome"/>
    <property type="evidence" value="ECO:0007669"/>
    <property type="project" value="InterPro"/>
</dbReference>
<dbReference type="GO" id="GO:0006412">
    <property type="term" value="P:translation"/>
    <property type="evidence" value="ECO:0007669"/>
    <property type="project" value="UniProtKB-UniRule"/>
</dbReference>
<dbReference type="FunFam" id="2.40.50.100:FF:000004">
    <property type="entry name" value="50S ribosomal protein L27"/>
    <property type="match status" value="1"/>
</dbReference>
<dbReference type="Gene3D" id="2.40.50.100">
    <property type="match status" value="1"/>
</dbReference>
<dbReference type="HAMAP" id="MF_00539">
    <property type="entry name" value="Ribosomal_bL27"/>
    <property type="match status" value="1"/>
</dbReference>
<dbReference type="InterPro" id="IPR001684">
    <property type="entry name" value="Ribosomal_bL27"/>
</dbReference>
<dbReference type="InterPro" id="IPR018261">
    <property type="entry name" value="Ribosomal_bL27_CS"/>
</dbReference>
<dbReference type="NCBIfam" id="TIGR00062">
    <property type="entry name" value="L27"/>
    <property type="match status" value="1"/>
</dbReference>
<dbReference type="PANTHER" id="PTHR15893:SF0">
    <property type="entry name" value="LARGE RIBOSOMAL SUBUNIT PROTEIN BL27M"/>
    <property type="match status" value="1"/>
</dbReference>
<dbReference type="PANTHER" id="PTHR15893">
    <property type="entry name" value="RIBOSOMAL PROTEIN L27"/>
    <property type="match status" value="1"/>
</dbReference>
<dbReference type="Pfam" id="PF01016">
    <property type="entry name" value="Ribosomal_L27"/>
    <property type="match status" value="1"/>
</dbReference>
<dbReference type="PRINTS" id="PR00063">
    <property type="entry name" value="RIBOSOMALL27"/>
</dbReference>
<dbReference type="SUPFAM" id="SSF110324">
    <property type="entry name" value="Ribosomal L27 protein-like"/>
    <property type="match status" value="1"/>
</dbReference>
<dbReference type="PROSITE" id="PS00831">
    <property type="entry name" value="RIBOSOMAL_L27"/>
    <property type="match status" value="1"/>
</dbReference>
<name>RL27_STAAE</name>